<evidence type="ECO:0000255" key="1">
    <source>
        <dbReference type="HAMAP-Rule" id="MF_01365"/>
    </source>
</evidence>
<evidence type="ECO:0000305" key="2"/>
<proteinExistence type="inferred from homology"/>
<comment type="function">
    <text evidence="1">This protein binds to the 23S rRNA, and is important in its secondary structure. It is located near the subunit interface in the base of the L7/L12 stalk, and near the tRNA binding site of the peptidyltransferase center.</text>
</comment>
<comment type="subunit">
    <text evidence="1">Part of the 50S ribosomal subunit.</text>
</comment>
<comment type="similarity">
    <text evidence="1">Belongs to the universal ribosomal protein uL6 family.</text>
</comment>
<gene>
    <name evidence="1" type="primary">rplF</name>
    <name type="ordered locus">Mnod_1923</name>
</gene>
<name>RL6_METNO</name>
<reference key="1">
    <citation type="submission" date="2009-01" db="EMBL/GenBank/DDBJ databases">
        <title>Complete sequence of chromosome of Methylobacterium nodulans ORS 2060.</title>
        <authorList>
            <consortium name="US DOE Joint Genome Institute"/>
            <person name="Lucas S."/>
            <person name="Copeland A."/>
            <person name="Lapidus A."/>
            <person name="Glavina del Rio T."/>
            <person name="Dalin E."/>
            <person name="Tice H."/>
            <person name="Bruce D."/>
            <person name="Goodwin L."/>
            <person name="Pitluck S."/>
            <person name="Sims D."/>
            <person name="Brettin T."/>
            <person name="Detter J.C."/>
            <person name="Han C."/>
            <person name="Larimer F."/>
            <person name="Land M."/>
            <person name="Hauser L."/>
            <person name="Kyrpides N."/>
            <person name="Ivanova N."/>
            <person name="Marx C.J."/>
            <person name="Richardson P."/>
        </authorList>
    </citation>
    <scope>NUCLEOTIDE SEQUENCE [LARGE SCALE GENOMIC DNA]</scope>
    <source>
        <strain>LMG 21967 / CNCM I-2342 / ORS 2060</strain>
    </source>
</reference>
<sequence length="177" mass="19225">MSRVGKKPVPVPAGVTATVDGQTVKVKGSKGELQFRVPDQVAVTHENGAISVQPRSQTKEARALWGLSRAQVANLVEGVTKGFEKKLEINGVGYRAAVAGKVLKLSLGYSHDIEYEIPAGITITTPRPVEIIVAGIDKQRVGQIAAEIREYRSPEPYKGKGVKYADEFIFRKEGKKK</sequence>
<dbReference type="EMBL" id="CP001349">
    <property type="protein sequence ID" value="ACL56912.1"/>
    <property type="molecule type" value="Genomic_DNA"/>
</dbReference>
<dbReference type="RefSeq" id="WP_015928601.1">
    <property type="nucleotide sequence ID" value="NC_011894.1"/>
</dbReference>
<dbReference type="SMR" id="B8ISA0"/>
<dbReference type="STRING" id="460265.Mnod_1923"/>
<dbReference type="KEGG" id="mno:Mnod_1923"/>
<dbReference type="eggNOG" id="COG0097">
    <property type="taxonomic scope" value="Bacteria"/>
</dbReference>
<dbReference type="HOGENOM" id="CLU_065464_1_2_5"/>
<dbReference type="OrthoDB" id="9805007at2"/>
<dbReference type="Proteomes" id="UP000008207">
    <property type="component" value="Chromosome"/>
</dbReference>
<dbReference type="GO" id="GO:0022625">
    <property type="term" value="C:cytosolic large ribosomal subunit"/>
    <property type="evidence" value="ECO:0007669"/>
    <property type="project" value="TreeGrafter"/>
</dbReference>
<dbReference type="GO" id="GO:0019843">
    <property type="term" value="F:rRNA binding"/>
    <property type="evidence" value="ECO:0007669"/>
    <property type="project" value="UniProtKB-UniRule"/>
</dbReference>
<dbReference type="GO" id="GO:0003735">
    <property type="term" value="F:structural constituent of ribosome"/>
    <property type="evidence" value="ECO:0007669"/>
    <property type="project" value="InterPro"/>
</dbReference>
<dbReference type="GO" id="GO:0002181">
    <property type="term" value="P:cytoplasmic translation"/>
    <property type="evidence" value="ECO:0007669"/>
    <property type="project" value="TreeGrafter"/>
</dbReference>
<dbReference type="FunFam" id="3.90.930.12:FF:000001">
    <property type="entry name" value="50S ribosomal protein L6"/>
    <property type="match status" value="1"/>
</dbReference>
<dbReference type="FunFam" id="3.90.930.12:FF:000002">
    <property type="entry name" value="50S ribosomal protein L6"/>
    <property type="match status" value="1"/>
</dbReference>
<dbReference type="Gene3D" id="3.90.930.12">
    <property type="entry name" value="Ribosomal protein L6, alpha-beta domain"/>
    <property type="match status" value="2"/>
</dbReference>
<dbReference type="HAMAP" id="MF_01365_B">
    <property type="entry name" value="Ribosomal_uL6_B"/>
    <property type="match status" value="1"/>
</dbReference>
<dbReference type="InterPro" id="IPR000702">
    <property type="entry name" value="Ribosomal_uL6-like"/>
</dbReference>
<dbReference type="InterPro" id="IPR036789">
    <property type="entry name" value="Ribosomal_uL6-like_a/b-dom_sf"/>
</dbReference>
<dbReference type="InterPro" id="IPR020040">
    <property type="entry name" value="Ribosomal_uL6_a/b-dom"/>
</dbReference>
<dbReference type="InterPro" id="IPR019906">
    <property type="entry name" value="Ribosomal_uL6_bac-type"/>
</dbReference>
<dbReference type="InterPro" id="IPR002358">
    <property type="entry name" value="Ribosomal_uL6_CS"/>
</dbReference>
<dbReference type="NCBIfam" id="TIGR03654">
    <property type="entry name" value="L6_bact"/>
    <property type="match status" value="1"/>
</dbReference>
<dbReference type="PANTHER" id="PTHR11655">
    <property type="entry name" value="60S/50S RIBOSOMAL PROTEIN L6/L9"/>
    <property type="match status" value="1"/>
</dbReference>
<dbReference type="PANTHER" id="PTHR11655:SF14">
    <property type="entry name" value="LARGE RIBOSOMAL SUBUNIT PROTEIN UL6M"/>
    <property type="match status" value="1"/>
</dbReference>
<dbReference type="Pfam" id="PF00347">
    <property type="entry name" value="Ribosomal_L6"/>
    <property type="match status" value="2"/>
</dbReference>
<dbReference type="PIRSF" id="PIRSF002162">
    <property type="entry name" value="Ribosomal_L6"/>
    <property type="match status" value="1"/>
</dbReference>
<dbReference type="PRINTS" id="PR00059">
    <property type="entry name" value="RIBOSOMALL6"/>
</dbReference>
<dbReference type="SUPFAM" id="SSF56053">
    <property type="entry name" value="Ribosomal protein L6"/>
    <property type="match status" value="2"/>
</dbReference>
<dbReference type="PROSITE" id="PS00525">
    <property type="entry name" value="RIBOSOMAL_L6_1"/>
    <property type="match status" value="1"/>
</dbReference>
<feature type="chain" id="PRO_1000166818" description="Large ribosomal subunit protein uL6">
    <location>
        <begin position="1"/>
        <end position="177"/>
    </location>
</feature>
<keyword id="KW-1185">Reference proteome</keyword>
<keyword id="KW-0687">Ribonucleoprotein</keyword>
<keyword id="KW-0689">Ribosomal protein</keyword>
<keyword id="KW-0694">RNA-binding</keyword>
<keyword id="KW-0699">rRNA-binding</keyword>
<protein>
    <recommendedName>
        <fullName evidence="1">Large ribosomal subunit protein uL6</fullName>
    </recommendedName>
    <alternativeName>
        <fullName evidence="2">50S ribosomal protein L6</fullName>
    </alternativeName>
</protein>
<accession>B8ISA0</accession>
<organism>
    <name type="scientific">Methylobacterium nodulans (strain LMG 21967 / CNCM I-2342 / ORS 2060)</name>
    <dbReference type="NCBI Taxonomy" id="460265"/>
    <lineage>
        <taxon>Bacteria</taxon>
        <taxon>Pseudomonadati</taxon>
        <taxon>Pseudomonadota</taxon>
        <taxon>Alphaproteobacteria</taxon>
        <taxon>Hyphomicrobiales</taxon>
        <taxon>Methylobacteriaceae</taxon>
        <taxon>Methylobacterium</taxon>
    </lineage>
</organism>